<accession>B1IRU7</accession>
<keyword id="KW-0067">ATP-binding</keyword>
<keyword id="KW-0997">Cell inner membrane</keyword>
<keyword id="KW-1003">Cell membrane</keyword>
<keyword id="KW-0472">Membrane</keyword>
<keyword id="KW-0547">Nucleotide-binding</keyword>
<keyword id="KW-0677">Repeat</keyword>
<keyword id="KW-1278">Translocase</keyword>
<keyword id="KW-0813">Transport</keyword>
<reference key="1">
    <citation type="submission" date="2008-02" db="EMBL/GenBank/DDBJ databases">
        <title>Complete sequence of Escherichia coli C str. ATCC 8739.</title>
        <authorList>
            <person name="Copeland A."/>
            <person name="Lucas S."/>
            <person name="Lapidus A."/>
            <person name="Glavina del Rio T."/>
            <person name="Dalin E."/>
            <person name="Tice H."/>
            <person name="Bruce D."/>
            <person name="Goodwin L."/>
            <person name="Pitluck S."/>
            <person name="Kiss H."/>
            <person name="Brettin T."/>
            <person name="Detter J.C."/>
            <person name="Han C."/>
            <person name="Kuske C.R."/>
            <person name="Schmutz J."/>
            <person name="Larimer F."/>
            <person name="Land M."/>
            <person name="Hauser L."/>
            <person name="Kyrpides N."/>
            <person name="Mikhailova N."/>
            <person name="Ingram L."/>
            <person name="Richardson P."/>
        </authorList>
    </citation>
    <scope>NUCLEOTIDE SEQUENCE [LARGE SCALE GENOMIC DNA]</scope>
    <source>
        <strain>ATCC 8739 / DSM 1576 / NBRC 3972 / NCIMB 8545 / WDCM 00012 / Crooks</strain>
    </source>
</reference>
<protein>
    <recommendedName>
        <fullName evidence="1">Autoinducer 2 import ATP-binding protein LsrA</fullName>
        <shortName evidence="1">AI-2 import ATP-binding protein LsrA</shortName>
        <ecNumber evidence="1">7.6.2.13</ecNumber>
    </recommendedName>
</protein>
<name>LSRA_ECOLC</name>
<sequence>MQTSDTRALPLLCARSVYKQYSGVNVLKGIDFTLHQGEVHALLGGNGAGKSTLMKIIAGITPADSGTLEIGGNNYARLTPVHAHQLGIYLVPQEPLLFPSLSIKENILFGLAKKQLSMQKMKNLLAALGCQFDLHSLAGSLDVADRQMVEILRGLMRDSRILILDEPTASLTPAETERLFTRLQELLATGVGIVFISHKLPEIRQIADRISVMRDGTIALSGKTSELSTDDIIQAITPVVREKSLSASQKLWLELPGNRPQHAAGTPVLTLENLTGEGFRNVSLTLNAGEILGLAGLVGAGRTELAETLYGLRTLRGGRIMLNGNEINKLSTGERLLRGLVYLPEDRQSSGLNLDASLAWNVCALTHNLRGFWAKTAKDNATLERYRRALNIKFNQPEQAARTLSGGNQQKILIAKCLEASPQVLIVDEPTRGVDVSARNDIYQLLRSIAAQNVAVLLISSDLEEIELMADRVYVMHQGEIAHSALTGRDINVETIMRVAFGDSQRQEASC</sequence>
<feature type="chain" id="PRO_0000351290" description="Autoinducer 2 import ATP-binding protein LsrA">
    <location>
        <begin position="1"/>
        <end position="511"/>
    </location>
</feature>
<feature type="domain" description="ABC transporter 1" evidence="2">
    <location>
        <begin position="12"/>
        <end position="240"/>
    </location>
</feature>
<feature type="domain" description="ABC transporter 2" evidence="2">
    <location>
        <begin position="240"/>
        <end position="503"/>
    </location>
</feature>
<feature type="binding site" evidence="2">
    <location>
        <begin position="44"/>
        <end position="51"/>
    </location>
    <ligand>
        <name>ATP</name>
        <dbReference type="ChEBI" id="CHEBI:30616"/>
    </ligand>
</feature>
<dbReference type="EC" id="7.6.2.13" evidence="1"/>
<dbReference type="EMBL" id="CP000946">
    <property type="protein sequence ID" value="ACA77785.1"/>
    <property type="molecule type" value="Genomic_DNA"/>
</dbReference>
<dbReference type="RefSeq" id="WP_001194875.1">
    <property type="nucleotide sequence ID" value="NZ_MTFT01000006.1"/>
</dbReference>
<dbReference type="SMR" id="B1IRU7"/>
<dbReference type="KEGG" id="ecl:EcolC_2145"/>
<dbReference type="HOGENOM" id="CLU_000604_92_3_6"/>
<dbReference type="GO" id="GO:0005886">
    <property type="term" value="C:plasma membrane"/>
    <property type="evidence" value="ECO:0007669"/>
    <property type="project" value="UniProtKB-SubCell"/>
</dbReference>
<dbReference type="GO" id="GO:0005524">
    <property type="term" value="F:ATP binding"/>
    <property type="evidence" value="ECO:0007669"/>
    <property type="project" value="UniProtKB-KW"/>
</dbReference>
<dbReference type="GO" id="GO:0016887">
    <property type="term" value="F:ATP hydrolysis activity"/>
    <property type="evidence" value="ECO:0007669"/>
    <property type="project" value="InterPro"/>
</dbReference>
<dbReference type="CDD" id="cd03216">
    <property type="entry name" value="ABC_Carb_Monos_I"/>
    <property type="match status" value="1"/>
</dbReference>
<dbReference type="CDD" id="cd03215">
    <property type="entry name" value="ABC_Carb_Monos_II"/>
    <property type="match status" value="1"/>
</dbReference>
<dbReference type="Gene3D" id="3.40.50.300">
    <property type="entry name" value="P-loop containing nucleotide triphosphate hydrolases"/>
    <property type="match status" value="2"/>
</dbReference>
<dbReference type="InterPro" id="IPR003593">
    <property type="entry name" value="AAA+_ATPase"/>
</dbReference>
<dbReference type="InterPro" id="IPR050107">
    <property type="entry name" value="ABC_carbohydrate_import_ATPase"/>
</dbReference>
<dbReference type="InterPro" id="IPR003439">
    <property type="entry name" value="ABC_transporter-like_ATP-bd"/>
</dbReference>
<dbReference type="InterPro" id="IPR017871">
    <property type="entry name" value="ABC_transporter-like_CS"/>
</dbReference>
<dbReference type="InterPro" id="IPR027417">
    <property type="entry name" value="P-loop_NTPase"/>
</dbReference>
<dbReference type="NCBIfam" id="NF011967">
    <property type="entry name" value="PRK15439.1"/>
    <property type="match status" value="1"/>
</dbReference>
<dbReference type="PANTHER" id="PTHR43790:SF2">
    <property type="entry name" value="AUTOINDUCER 2 IMPORT ATP-BINDING PROTEIN LSRA"/>
    <property type="match status" value="1"/>
</dbReference>
<dbReference type="PANTHER" id="PTHR43790">
    <property type="entry name" value="CARBOHYDRATE TRANSPORT ATP-BINDING PROTEIN MG119-RELATED"/>
    <property type="match status" value="1"/>
</dbReference>
<dbReference type="Pfam" id="PF00005">
    <property type="entry name" value="ABC_tran"/>
    <property type="match status" value="2"/>
</dbReference>
<dbReference type="SMART" id="SM00382">
    <property type="entry name" value="AAA"/>
    <property type="match status" value="2"/>
</dbReference>
<dbReference type="SUPFAM" id="SSF52540">
    <property type="entry name" value="P-loop containing nucleoside triphosphate hydrolases"/>
    <property type="match status" value="2"/>
</dbReference>
<dbReference type="PROSITE" id="PS00211">
    <property type="entry name" value="ABC_TRANSPORTER_1"/>
    <property type="match status" value="1"/>
</dbReference>
<dbReference type="PROSITE" id="PS50893">
    <property type="entry name" value="ABC_TRANSPORTER_2"/>
    <property type="match status" value="2"/>
</dbReference>
<proteinExistence type="inferred from homology"/>
<evidence type="ECO:0000250" key="1">
    <source>
        <dbReference type="UniProtKB" id="P77257"/>
    </source>
</evidence>
<evidence type="ECO:0000255" key="2">
    <source>
        <dbReference type="PROSITE-ProRule" id="PRU00434"/>
    </source>
</evidence>
<evidence type="ECO:0000305" key="3"/>
<comment type="function">
    <text evidence="1">Part of the ABC transporter complex LsrABCD involved in autoinducer 2 (AI-2) import. Responsible for energy coupling to the transport system.</text>
</comment>
<comment type="catalytic activity">
    <reaction evidence="1">
        <text>ATP + H2O + (2R,4S)-2-methyl-2,3,3,4-tetrahydroxytetrahydrofuran-[AI-2-binding protein]Side 1 = ADP + phosphate + (2R,4S)-2-methyl-2,3,3,4-tetrahydroxytetrahydrofuranSide 2 + [AI-2-binding protein]Side 1.</text>
        <dbReference type="EC" id="7.6.2.13"/>
    </reaction>
</comment>
<comment type="subunit">
    <text evidence="1">The complex is composed of two ATP-binding proteins (LsrA), two transmembrane proteins (LsrC and LsrD) and a solute-binding protein (LsrB).</text>
</comment>
<comment type="subcellular location">
    <subcellularLocation>
        <location evidence="1">Cell inner membrane</location>
        <topology evidence="1">Peripheral membrane protein</topology>
    </subcellularLocation>
</comment>
<comment type="similarity">
    <text evidence="3">Belongs to the ABC transporter superfamily. AI-2 autoinducer porter (TC 3.A.1.2.8) family.</text>
</comment>
<organism>
    <name type="scientific">Escherichia coli (strain ATCC 8739 / DSM 1576 / NBRC 3972 / NCIMB 8545 / WDCM 00012 / Crooks)</name>
    <dbReference type="NCBI Taxonomy" id="481805"/>
    <lineage>
        <taxon>Bacteria</taxon>
        <taxon>Pseudomonadati</taxon>
        <taxon>Pseudomonadota</taxon>
        <taxon>Gammaproteobacteria</taxon>
        <taxon>Enterobacterales</taxon>
        <taxon>Enterobacteriaceae</taxon>
        <taxon>Escherichia</taxon>
    </lineage>
</organism>
<gene>
    <name type="primary">lsrA</name>
    <name type="ordered locus">EcolC_2145</name>
</gene>